<reference key="1">
    <citation type="submission" date="2007-03" db="EMBL/GenBank/DDBJ databases">
        <title>Complete sequence of chromosome of Methanococcus maripaludis C5.</title>
        <authorList>
            <consortium name="US DOE Joint Genome Institute"/>
            <person name="Copeland A."/>
            <person name="Lucas S."/>
            <person name="Lapidus A."/>
            <person name="Barry K."/>
            <person name="Glavina del Rio T."/>
            <person name="Dalin E."/>
            <person name="Tice H."/>
            <person name="Pitluck S."/>
            <person name="Chertkov O."/>
            <person name="Brettin T."/>
            <person name="Bruce D."/>
            <person name="Han C."/>
            <person name="Detter J.C."/>
            <person name="Schmutz J."/>
            <person name="Larimer F."/>
            <person name="Land M."/>
            <person name="Hauser L."/>
            <person name="Kyrpides N."/>
            <person name="Mikhailova N."/>
            <person name="Sieprawska-Lupa M."/>
            <person name="Whitman W.B."/>
            <person name="Richardson P."/>
        </authorList>
    </citation>
    <scope>NUCLEOTIDE SEQUENCE [LARGE SCALE GENOMIC DNA]</scope>
    <source>
        <strain>C5 / ATCC BAA-1333</strain>
    </source>
</reference>
<protein>
    <recommendedName>
        <fullName evidence="1">Ribonuclease P protein component 3</fullName>
        <shortName evidence="1">RNase P component 3</shortName>
        <ecNumber evidence="1">3.1.26.5</ecNumber>
    </recommendedName>
    <alternativeName>
        <fullName evidence="1">Rpp30</fullName>
    </alternativeName>
</protein>
<name>RNP3_METM5</name>
<comment type="function">
    <text evidence="1">Part of ribonuclease P, a protein complex that generates mature tRNA molecules by cleaving their 5'-ends.</text>
</comment>
<comment type="catalytic activity">
    <reaction evidence="1">
        <text>Endonucleolytic cleavage of RNA, removing 5'-extranucleotides from tRNA precursor.</text>
        <dbReference type="EC" id="3.1.26.5"/>
    </reaction>
</comment>
<comment type="subunit">
    <text evidence="1">Consists of a catalytic RNA component and at least 4-5 protein subunits.</text>
</comment>
<comment type="subcellular location">
    <subcellularLocation>
        <location evidence="1">Cytoplasm</location>
    </subcellularLocation>
</comment>
<comment type="similarity">
    <text evidence="1">Belongs to the eukaryotic/archaeal RNase P protein component 3 family.</text>
</comment>
<evidence type="ECO:0000255" key="1">
    <source>
        <dbReference type="HAMAP-Rule" id="MF_00756"/>
    </source>
</evidence>
<feature type="chain" id="PRO_1000046627" description="Ribonuclease P protein component 3">
    <location>
        <begin position="1"/>
        <end position="231"/>
    </location>
</feature>
<dbReference type="EC" id="3.1.26.5" evidence="1"/>
<dbReference type="EMBL" id="CP000609">
    <property type="protein sequence ID" value="ABO35505.1"/>
    <property type="molecule type" value="Genomic_DNA"/>
</dbReference>
<dbReference type="RefSeq" id="WP_011868958.1">
    <property type="nucleotide sequence ID" value="NC_009135.1"/>
</dbReference>
<dbReference type="SMR" id="A4FZ71"/>
<dbReference type="STRING" id="402880.MmarC5_1207"/>
<dbReference type="GeneID" id="4928940"/>
<dbReference type="KEGG" id="mmq:MmarC5_1207"/>
<dbReference type="eggNOG" id="arCOG00307">
    <property type="taxonomic scope" value="Archaea"/>
</dbReference>
<dbReference type="HOGENOM" id="CLU_074509_0_0_2"/>
<dbReference type="OrthoDB" id="85765at2157"/>
<dbReference type="Proteomes" id="UP000000253">
    <property type="component" value="Chromosome"/>
</dbReference>
<dbReference type="GO" id="GO:0005737">
    <property type="term" value="C:cytoplasm"/>
    <property type="evidence" value="ECO:0007669"/>
    <property type="project" value="UniProtKB-SubCell"/>
</dbReference>
<dbReference type="GO" id="GO:0030677">
    <property type="term" value="C:ribonuclease P complex"/>
    <property type="evidence" value="ECO:0007669"/>
    <property type="project" value="UniProtKB-UniRule"/>
</dbReference>
<dbReference type="GO" id="GO:0004526">
    <property type="term" value="F:ribonuclease P activity"/>
    <property type="evidence" value="ECO:0007669"/>
    <property type="project" value="UniProtKB-UniRule"/>
</dbReference>
<dbReference type="GO" id="GO:0001682">
    <property type="term" value="P:tRNA 5'-leader removal"/>
    <property type="evidence" value="ECO:0007669"/>
    <property type="project" value="UniProtKB-UniRule"/>
</dbReference>
<dbReference type="FunFam" id="3.20.20.140:FF:000196">
    <property type="entry name" value="Ribonuclease P protein component 3"/>
    <property type="match status" value="1"/>
</dbReference>
<dbReference type="Gene3D" id="3.20.20.140">
    <property type="entry name" value="Metal-dependent hydrolases"/>
    <property type="match status" value="1"/>
</dbReference>
<dbReference type="HAMAP" id="MF_00756">
    <property type="entry name" value="RNase_P_3"/>
    <property type="match status" value="1"/>
</dbReference>
<dbReference type="InterPro" id="IPR016195">
    <property type="entry name" value="Pol/histidinol_Pase-like"/>
</dbReference>
<dbReference type="InterPro" id="IPR023539">
    <property type="entry name" value="RNase_P_comp-3_arc"/>
</dbReference>
<dbReference type="InterPro" id="IPR002738">
    <property type="entry name" value="RNase_P_p30"/>
</dbReference>
<dbReference type="NCBIfam" id="NF046108">
    <property type="entry name" value="RNaseP3Mthcoc"/>
    <property type="match status" value="1"/>
</dbReference>
<dbReference type="Pfam" id="PF01876">
    <property type="entry name" value="RNase_P_p30"/>
    <property type="match status" value="1"/>
</dbReference>
<dbReference type="SUPFAM" id="SSF89550">
    <property type="entry name" value="PHP domain-like"/>
    <property type="match status" value="1"/>
</dbReference>
<organism>
    <name type="scientific">Methanococcus maripaludis (strain C5 / ATCC BAA-1333)</name>
    <dbReference type="NCBI Taxonomy" id="402880"/>
    <lineage>
        <taxon>Archaea</taxon>
        <taxon>Methanobacteriati</taxon>
        <taxon>Methanobacteriota</taxon>
        <taxon>Methanomada group</taxon>
        <taxon>Methanococci</taxon>
        <taxon>Methanococcales</taxon>
        <taxon>Methanococcaceae</taxon>
        <taxon>Methanococcus</taxon>
    </lineage>
</organism>
<sequence length="231" mass="26386">MLEGIFDINHIFDENGIKTLKRFGWDGSVAVQNHNEYSEEKINNAVEYGENCEFKVFSGLKLSTKNQNEMEKAVKKYRNKVDILLVEGGEIKINRRVLEMNDVDILSTPELNRMDNGLDHILARLGSTNRVAIELNFGNLLKSRNYDRSKILWAFQRNLKLAKKYDTPVVISSGANDIYGIKAPGDLRGFLNTITDPLYSKKIIETPSKIVDYRLYLKKDNVLTLGIEVVE</sequence>
<gene>
    <name evidence="1" type="primary">rnp3</name>
    <name type="ordered locus">MmarC5_1207</name>
</gene>
<keyword id="KW-0963">Cytoplasm</keyword>
<keyword id="KW-0255">Endonuclease</keyword>
<keyword id="KW-0378">Hydrolase</keyword>
<keyword id="KW-0540">Nuclease</keyword>
<keyword id="KW-0819">tRNA processing</keyword>
<accession>A4FZ71</accession>
<proteinExistence type="inferred from homology"/>